<reference key="1">
    <citation type="submission" date="2008-08" db="EMBL/GenBank/DDBJ databases">
        <title>Complete sequence of Vibrio fischeri strain MJ11.</title>
        <authorList>
            <person name="Mandel M.J."/>
            <person name="Stabb E.V."/>
            <person name="Ruby E.G."/>
            <person name="Ferriera S."/>
            <person name="Johnson J."/>
            <person name="Kravitz S."/>
            <person name="Beeson K."/>
            <person name="Sutton G."/>
            <person name="Rogers Y.-H."/>
            <person name="Friedman R."/>
            <person name="Frazier M."/>
            <person name="Venter J.C."/>
        </authorList>
    </citation>
    <scope>NUCLEOTIDE SEQUENCE [LARGE SCALE GENOMIC DNA]</scope>
    <source>
        <strain>MJ11</strain>
    </source>
</reference>
<organism>
    <name type="scientific">Aliivibrio fischeri (strain MJ11)</name>
    <name type="common">Vibrio fischeri</name>
    <dbReference type="NCBI Taxonomy" id="388396"/>
    <lineage>
        <taxon>Bacteria</taxon>
        <taxon>Pseudomonadati</taxon>
        <taxon>Pseudomonadota</taxon>
        <taxon>Gammaproteobacteria</taxon>
        <taxon>Vibrionales</taxon>
        <taxon>Vibrionaceae</taxon>
        <taxon>Aliivibrio</taxon>
    </lineage>
</organism>
<feature type="chain" id="PRO_1000125773" description="Glucose-6-phosphate isomerase">
    <location>
        <begin position="1"/>
        <end position="550"/>
    </location>
</feature>
<feature type="active site" description="Proton donor" evidence="1">
    <location>
        <position position="356"/>
    </location>
</feature>
<feature type="active site" evidence="1">
    <location>
        <position position="387"/>
    </location>
</feature>
<feature type="active site" evidence="1">
    <location>
        <position position="515"/>
    </location>
</feature>
<protein>
    <recommendedName>
        <fullName evidence="1">Glucose-6-phosphate isomerase</fullName>
        <shortName evidence="1">GPI</shortName>
        <ecNumber evidence="1">5.3.1.9</ecNumber>
    </recommendedName>
    <alternativeName>
        <fullName evidence="1">Phosphoglucose isomerase</fullName>
        <shortName evidence="1">PGI</shortName>
    </alternativeName>
    <alternativeName>
        <fullName evidence="1">Phosphohexose isomerase</fullName>
        <shortName evidence="1">PHI</shortName>
    </alternativeName>
</protein>
<comment type="function">
    <text evidence="1">Catalyzes the reversible isomerization of glucose-6-phosphate to fructose-6-phosphate.</text>
</comment>
<comment type="catalytic activity">
    <reaction evidence="1">
        <text>alpha-D-glucose 6-phosphate = beta-D-fructose 6-phosphate</text>
        <dbReference type="Rhea" id="RHEA:11816"/>
        <dbReference type="ChEBI" id="CHEBI:57634"/>
        <dbReference type="ChEBI" id="CHEBI:58225"/>
        <dbReference type="EC" id="5.3.1.9"/>
    </reaction>
</comment>
<comment type="pathway">
    <text evidence="1">Carbohydrate biosynthesis; gluconeogenesis.</text>
</comment>
<comment type="pathway">
    <text evidence="1">Carbohydrate degradation; glycolysis; D-glyceraldehyde 3-phosphate and glycerone phosphate from D-glucose: step 2/4.</text>
</comment>
<comment type="subcellular location">
    <subcellularLocation>
        <location evidence="1">Cytoplasm</location>
    </subcellularLocation>
</comment>
<comment type="similarity">
    <text evidence="1">Belongs to the GPI family.</text>
</comment>
<gene>
    <name evidence="1" type="primary">pgi</name>
    <name type="ordered locus">VFMJ11_0291</name>
</gene>
<evidence type="ECO:0000255" key="1">
    <source>
        <dbReference type="HAMAP-Rule" id="MF_00473"/>
    </source>
</evidence>
<dbReference type="EC" id="5.3.1.9" evidence="1"/>
<dbReference type="EMBL" id="CP001139">
    <property type="protein sequence ID" value="ACH64969.1"/>
    <property type="molecule type" value="Genomic_DNA"/>
</dbReference>
<dbReference type="RefSeq" id="WP_011261112.1">
    <property type="nucleotide sequence ID" value="NC_011184.1"/>
</dbReference>
<dbReference type="SMR" id="B5FGI2"/>
<dbReference type="GeneID" id="54162923"/>
<dbReference type="KEGG" id="vfm:VFMJ11_0291"/>
<dbReference type="HOGENOM" id="CLU_017947_3_1_6"/>
<dbReference type="UniPathway" id="UPA00109">
    <property type="reaction ID" value="UER00181"/>
</dbReference>
<dbReference type="UniPathway" id="UPA00138"/>
<dbReference type="Proteomes" id="UP000001857">
    <property type="component" value="Chromosome I"/>
</dbReference>
<dbReference type="GO" id="GO:0005829">
    <property type="term" value="C:cytosol"/>
    <property type="evidence" value="ECO:0007669"/>
    <property type="project" value="TreeGrafter"/>
</dbReference>
<dbReference type="GO" id="GO:0097367">
    <property type="term" value="F:carbohydrate derivative binding"/>
    <property type="evidence" value="ECO:0007669"/>
    <property type="project" value="InterPro"/>
</dbReference>
<dbReference type="GO" id="GO:0004347">
    <property type="term" value="F:glucose-6-phosphate isomerase activity"/>
    <property type="evidence" value="ECO:0007669"/>
    <property type="project" value="UniProtKB-UniRule"/>
</dbReference>
<dbReference type="GO" id="GO:0048029">
    <property type="term" value="F:monosaccharide binding"/>
    <property type="evidence" value="ECO:0007669"/>
    <property type="project" value="TreeGrafter"/>
</dbReference>
<dbReference type="GO" id="GO:0006094">
    <property type="term" value="P:gluconeogenesis"/>
    <property type="evidence" value="ECO:0007669"/>
    <property type="project" value="UniProtKB-UniRule"/>
</dbReference>
<dbReference type="GO" id="GO:0051156">
    <property type="term" value="P:glucose 6-phosphate metabolic process"/>
    <property type="evidence" value="ECO:0007669"/>
    <property type="project" value="TreeGrafter"/>
</dbReference>
<dbReference type="GO" id="GO:0006096">
    <property type="term" value="P:glycolytic process"/>
    <property type="evidence" value="ECO:0007669"/>
    <property type="project" value="UniProtKB-UniRule"/>
</dbReference>
<dbReference type="CDD" id="cd05015">
    <property type="entry name" value="SIS_PGI_1"/>
    <property type="match status" value="1"/>
</dbReference>
<dbReference type="CDD" id="cd05016">
    <property type="entry name" value="SIS_PGI_2"/>
    <property type="match status" value="1"/>
</dbReference>
<dbReference type="FunFam" id="1.10.1390.10:FF:000001">
    <property type="entry name" value="Glucose-6-phosphate isomerase"/>
    <property type="match status" value="1"/>
</dbReference>
<dbReference type="FunFam" id="3.40.50.10490:FF:000004">
    <property type="entry name" value="Glucose-6-phosphate isomerase"/>
    <property type="match status" value="1"/>
</dbReference>
<dbReference type="Gene3D" id="1.10.1390.10">
    <property type="match status" value="1"/>
</dbReference>
<dbReference type="Gene3D" id="3.40.50.10490">
    <property type="entry name" value="Glucose-6-phosphate isomerase like protein, domain 1"/>
    <property type="match status" value="2"/>
</dbReference>
<dbReference type="HAMAP" id="MF_00473">
    <property type="entry name" value="G6P_isomerase"/>
    <property type="match status" value="1"/>
</dbReference>
<dbReference type="InterPro" id="IPR001672">
    <property type="entry name" value="G6P_Isomerase"/>
</dbReference>
<dbReference type="InterPro" id="IPR023096">
    <property type="entry name" value="G6P_Isomerase_C"/>
</dbReference>
<dbReference type="InterPro" id="IPR018189">
    <property type="entry name" value="Phosphoglucose_isomerase_CS"/>
</dbReference>
<dbReference type="InterPro" id="IPR046348">
    <property type="entry name" value="SIS_dom_sf"/>
</dbReference>
<dbReference type="InterPro" id="IPR035476">
    <property type="entry name" value="SIS_PGI_1"/>
</dbReference>
<dbReference type="InterPro" id="IPR035482">
    <property type="entry name" value="SIS_PGI_2"/>
</dbReference>
<dbReference type="NCBIfam" id="NF001211">
    <property type="entry name" value="PRK00179.1"/>
    <property type="match status" value="1"/>
</dbReference>
<dbReference type="PANTHER" id="PTHR11469">
    <property type="entry name" value="GLUCOSE-6-PHOSPHATE ISOMERASE"/>
    <property type="match status" value="1"/>
</dbReference>
<dbReference type="PANTHER" id="PTHR11469:SF1">
    <property type="entry name" value="GLUCOSE-6-PHOSPHATE ISOMERASE"/>
    <property type="match status" value="1"/>
</dbReference>
<dbReference type="Pfam" id="PF00342">
    <property type="entry name" value="PGI"/>
    <property type="match status" value="1"/>
</dbReference>
<dbReference type="PRINTS" id="PR00662">
    <property type="entry name" value="G6PISOMERASE"/>
</dbReference>
<dbReference type="SUPFAM" id="SSF53697">
    <property type="entry name" value="SIS domain"/>
    <property type="match status" value="1"/>
</dbReference>
<dbReference type="PROSITE" id="PS00765">
    <property type="entry name" value="P_GLUCOSE_ISOMERASE_1"/>
    <property type="match status" value="1"/>
</dbReference>
<dbReference type="PROSITE" id="PS00174">
    <property type="entry name" value="P_GLUCOSE_ISOMERASE_2"/>
    <property type="match status" value="1"/>
</dbReference>
<dbReference type="PROSITE" id="PS51463">
    <property type="entry name" value="P_GLUCOSE_ISOMERASE_3"/>
    <property type="match status" value="1"/>
</dbReference>
<name>G6PI_ALIFM</name>
<sequence length="550" mass="60931">MLKNINPTETQAWADLTAHFETAQDFNLSDLFAADAQRFDKFSATFGQDILVDFSKNLITEETMKKLFALAEQTELSSAITAMFSGEKINKTEGRSVLHTALRNRSNTPVMVDGEDVMPAVNAVLEKMKGFTERLISGEWKGYTGKEITDIVNIGIGGSDLGPYMVSEALAPYKTRLNMHFVSNVDGTHIVETLKPLNPETTLFLIASKTFTTQETMTNAHSARDWFLAEAGDQAHVAKHFAALSTNAQSVSEFGIDTDNMFEFWDWVGGRYSLWSAIGLSIALAVGFDNFIELLEGAHEVDKHFAETDLENNVPVILALIGLWYNNFHGAESESILPYDQYLHRFAAYFQQGNMESNGKCVDRNGNPVDYQTGPIIWGEPGTNGQHAFYQLIHQGTKLIPCDFIAPAISHNQVGDHHQKLMSNFFAQTEALAFGKTEETVKAEFAAAGKTEAEVAELVPFKVFEGNRPTNSILVKQVTPKTLGNLIAMYEHKIFVQGVIWNIFSFDQWGVELGKQLANQILPELADDKAVTSHDSSTNGLINAFKAFQA</sequence>
<accession>B5FGI2</accession>
<proteinExistence type="inferred from homology"/>
<keyword id="KW-0963">Cytoplasm</keyword>
<keyword id="KW-0312">Gluconeogenesis</keyword>
<keyword id="KW-0324">Glycolysis</keyword>
<keyword id="KW-0413">Isomerase</keyword>